<reference key="1">
    <citation type="journal article" date="1996" name="DNA Res.">
        <title>A 570-kb DNA sequence of the Escherichia coli K-12 genome corresponding to the 28.0-40.1 min region on the linkage map.</title>
        <authorList>
            <person name="Aiba H."/>
            <person name="Baba T."/>
            <person name="Fujita K."/>
            <person name="Hayashi K."/>
            <person name="Inada T."/>
            <person name="Isono K."/>
            <person name="Itoh T."/>
            <person name="Kasai H."/>
            <person name="Kashimoto K."/>
            <person name="Kimura S."/>
            <person name="Kitakawa M."/>
            <person name="Kitagawa M."/>
            <person name="Makino K."/>
            <person name="Miki T."/>
            <person name="Mizobuchi K."/>
            <person name="Mori H."/>
            <person name="Mori T."/>
            <person name="Motomura K."/>
            <person name="Nakade S."/>
            <person name="Nakamura Y."/>
            <person name="Nashimoto H."/>
            <person name="Nishio Y."/>
            <person name="Oshima T."/>
            <person name="Saito N."/>
            <person name="Sampei G."/>
            <person name="Seki Y."/>
            <person name="Sivasundaram S."/>
            <person name="Tagami H."/>
            <person name="Takeda J."/>
            <person name="Takemoto K."/>
            <person name="Takeuchi Y."/>
            <person name="Wada C."/>
            <person name="Yamamoto Y."/>
            <person name="Horiuchi T."/>
        </authorList>
    </citation>
    <scope>NUCLEOTIDE SEQUENCE [LARGE SCALE GENOMIC DNA]</scope>
    <source>
        <strain>K12 / W3110 / ATCC 27325 / DSM 5911</strain>
    </source>
</reference>
<reference key="2">
    <citation type="journal article" date="1997" name="Science">
        <title>The complete genome sequence of Escherichia coli K-12.</title>
        <authorList>
            <person name="Blattner F.R."/>
            <person name="Plunkett G. III"/>
            <person name="Bloch C.A."/>
            <person name="Perna N.T."/>
            <person name="Burland V."/>
            <person name="Riley M."/>
            <person name="Collado-Vides J."/>
            <person name="Glasner J.D."/>
            <person name="Rode C.K."/>
            <person name="Mayhew G.F."/>
            <person name="Gregor J."/>
            <person name="Davis N.W."/>
            <person name="Kirkpatrick H.A."/>
            <person name="Goeden M.A."/>
            <person name="Rose D.J."/>
            <person name="Mau B."/>
            <person name="Shao Y."/>
        </authorList>
    </citation>
    <scope>NUCLEOTIDE SEQUENCE [LARGE SCALE GENOMIC DNA]</scope>
    <source>
        <strain>K12 / MG1655 / ATCC 47076</strain>
    </source>
</reference>
<reference key="3">
    <citation type="journal article" date="2006" name="Mol. Syst. Biol.">
        <title>Highly accurate genome sequences of Escherichia coli K-12 strains MG1655 and W3110.</title>
        <authorList>
            <person name="Hayashi K."/>
            <person name="Morooka N."/>
            <person name="Yamamoto Y."/>
            <person name="Fujita K."/>
            <person name="Isono K."/>
            <person name="Choi S."/>
            <person name="Ohtsubo E."/>
            <person name="Baba T."/>
            <person name="Wanner B.L."/>
            <person name="Mori H."/>
            <person name="Horiuchi T."/>
        </authorList>
    </citation>
    <scope>NUCLEOTIDE SEQUENCE [LARGE SCALE GENOMIC DNA]</scope>
    <source>
        <strain>K12 / W3110 / ATCC 27325 / DSM 5911</strain>
    </source>
</reference>
<reference key="4">
    <citation type="journal article" date="1996" name="Biochimie">
        <title>Sequence and functional analysis of an Escherichia coli DNA fragment able to complement pqqE and pqqF mutants from Methylobacterium organophilum.</title>
        <authorList>
            <person name="Turlin E."/>
            <person name="Gasser F."/>
            <person name="Biville F."/>
        </authorList>
    </citation>
    <scope>NUCLEOTIDE SEQUENCE [GENOMIC DNA] OF 306-561</scope>
    <source>
        <strain>K12</strain>
    </source>
</reference>
<reference key="5">
    <citation type="journal article" date="2005" name="Science">
        <title>Global topology analysis of the Escherichia coli inner membrane proteome.</title>
        <authorList>
            <person name="Daley D.O."/>
            <person name="Rapp M."/>
            <person name="Granseth E."/>
            <person name="Melen K."/>
            <person name="Drew D."/>
            <person name="von Heijne G."/>
        </authorList>
    </citation>
    <scope>TOPOLOGY [LARGE SCALE ANALYSIS]</scope>
    <source>
        <strain>K12 / MG1655 / ATCC 47076</strain>
    </source>
</reference>
<comment type="subcellular location">
    <subcellularLocation>
        <location>Cell inner membrane</location>
        <topology>Multi-pass membrane protein</topology>
    </subcellularLocation>
</comment>
<comment type="similarity">
    <text evidence="4">Belongs to the ABC transporter superfamily.</text>
</comment>
<comment type="sequence caution" evidence="4">
    <conflict type="erroneous initiation">
        <sequence resource="EMBL-CDS" id="CAA50732"/>
    </conflict>
</comment>
<dbReference type="EMBL" id="U00096">
    <property type="protein sequence ID" value="AAC74569.1"/>
    <property type="molecule type" value="Genomic_DNA"/>
</dbReference>
<dbReference type="EMBL" id="AP009048">
    <property type="protein sequence ID" value="BAA15167.2"/>
    <property type="molecule type" value="Genomic_DNA"/>
</dbReference>
<dbReference type="EMBL" id="X71917">
    <property type="protein sequence ID" value="CAA50732.1"/>
    <property type="status" value="ALT_INIT"/>
    <property type="molecule type" value="Genomic_DNA"/>
</dbReference>
<dbReference type="PIR" id="C64903">
    <property type="entry name" value="C64903"/>
</dbReference>
<dbReference type="RefSeq" id="NP_416013.1">
    <property type="nucleotide sequence ID" value="NC_000913.3"/>
</dbReference>
<dbReference type="RefSeq" id="WP_000628576.1">
    <property type="nucleotide sequence ID" value="NZ_SSZK01000001.1"/>
</dbReference>
<dbReference type="SMR" id="P31826"/>
<dbReference type="BioGRID" id="4260785">
    <property type="interactions" value="212"/>
</dbReference>
<dbReference type="FunCoup" id="P31826">
    <property type="interactions" value="659"/>
</dbReference>
<dbReference type="STRING" id="511145.b1496"/>
<dbReference type="TCDB" id="3.A.1.203.11">
    <property type="family name" value="the atp-binding cassette (abc) superfamily"/>
</dbReference>
<dbReference type="PaxDb" id="511145-b1496"/>
<dbReference type="EnsemblBacteria" id="AAC74569">
    <property type="protein sequence ID" value="AAC74569"/>
    <property type="gene ID" value="b1496"/>
</dbReference>
<dbReference type="GeneID" id="945945"/>
<dbReference type="KEGG" id="ecj:JW5242"/>
<dbReference type="KEGG" id="eco:b1496"/>
<dbReference type="KEGG" id="ecoc:C3026_08665"/>
<dbReference type="PATRIC" id="fig|1411691.4.peg.770"/>
<dbReference type="EchoBASE" id="EB1693"/>
<dbReference type="eggNOG" id="COG4178">
    <property type="taxonomic scope" value="Bacteria"/>
</dbReference>
<dbReference type="HOGENOM" id="CLU_007587_6_1_6"/>
<dbReference type="InParanoid" id="P31826"/>
<dbReference type="OMA" id="DIQAGHF"/>
<dbReference type="OrthoDB" id="9810134at2"/>
<dbReference type="PhylomeDB" id="P31826"/>
<dbReference type="BioCyc" id="EcoCyc:YDDA-MONOMER"/>
<dbReference type="PRO" id="PR:P31826"/>
<dbReference type="Proteomes" id="UP000000625">
    <property type="component" value="Chromosome"/>
</dbReference>
<dbReference type="GO" id="GO:0016020">
    <property type="term" value="C:membrane"/>
    <property type="evidence" value="ECO:0000255"/>
    <property type="project" value="EcoCyc"/>
</dbReference>
<dbReference type="GO" id="GO:0005886">
    <property type="term" value="C:plasma membrane"/>
    <property type="evidence" value="ECO:0000314"/>
    <property type="project" value="EcoCyc"/>
</dbReference>
<dbReference type="GO" id="GO:0140359">
    <property type="term" value="F:ABC-type transporter activity"/>
    <property type="evidence" value="ECO:0007669"/>
    <property type="project" value="InterPro"/>
</dbReference>
<dbReference type="GO" id="GO:0005524">
    <property type="term" value="F:ATP binding"/>
    <property type="evidence" value="ECO:0000255"/>
    <property type="project" value="EcoCyc"/>
</dbReference>
<dbReference type="GO" id="GO:0016887">
    <property type="term" value="F:ATP hydrolysis activity"/>
    <property type="evidence" value="ECO:0007669"/>
    <property type="project" value="InterPro"/>
</dbReference>
<dbReference type="CDD" id="cd03223">
    <property type="entry name" value="ABCD_peroxisomal_ALDP"/>
    <property type="match status" value="1"/>
</dbReference>
<dbReference type="FunFam" id="1.20.1560.10:FF:000125">
    <property type="entry name" value="Hypothetical ABC transporter ATP-binding protein yddA"/>
    <property type="match status" value="1"/>
</dbReference>
<dbReference type="Gene3D" id="1.20.1560.10">
    <property type="entry name" value="ABC transporter type 1, transmembrane domain"/>
    <property type="match status" value="1"/>
</dbReference>
<dbReference type="Gene3D" id="3.40.50.300">
    <property type="entry name" value="P-loop containing nucleotide triphosphate hydrolases"/>
    <property type="match status" value="1"/>
</dbReference>
<dbReference type="InterPro" id="IPR003593">
    <property type="entry name" value="AAA+_ATPase"/>
</dbReference>
<dbReference type="InterPro" id="IPR011527">
    <property type="entry name" value="ABC1_TM_dom"/>
</dbReference>
<dbReference type="InterPro" id="IPR036640">
    <property type="entry name" value="ABC1_TM_sf"/>
</dbReference>
<dbReference type="InterPro" id="IPR003439">
    <property type="entry name" value="ABC_transporter-like_ATP-bd"/>
</dbReference>
<dbReference type="InterPro" id="IPR017871">
    <property type="entry name" value="ABC_transporter-like_CS"/>
</dbReference>
<dbReference type="InterPro" id="IPR050835">
    <property type="entry name" value="ABC_transporter_sub-D"/>
</dbReference>
<dbReference type="InterPro" id="IPR027417">
    <property type="entry name" value="P-loop_NTPase"/>
</dbReference>
<dbReference type="PANTHER" id="PTHR11384">
    <property type="entry name" value="ATP-BINDING CASSETTE, SUB-FAMILY D MEMBER"/>
    <property type="match status" value="1"/>
</dbReference>
<dbReference type="PANTHER" id="PTHR11384:SF59">
    <property type="entry name" value="LYSOSOMAL COBALAMIN TRANSPORTER ABCD4"/>
    <property type="match status" value="1"/>
</dbReference>
<dbReference type="Pfam" id="PF06472">
    <property type="entry name" value="ABC_membrane_2"/>
    <property type="match status" value="1"/>
</dbReference>
<dbReference type="Pfam" id="PF00005">
    <property type="entry name" value="ABC_tran"/>
    <property type="match status" value="1"/>
</dbReference>
<dbReference type="SMART" id="SM00382">
    <property type="entry name" value="AAA"/>
    <property type="match status" value="1"/>
</dbReference>
<dbReference type="SUPFAM" id="SSF90123">
    <property type="entry name" value="ABC transporter transmembrane region"/>
    <property type="match status" value="1"/>
</dbReference>
<dbReference type="SUPFAM" id="SSF52540">
    <property type="entry name" value="P-loop containing nucleoside triphosphate hydrolases"/>
    <property type="match status" value="1"/>
</dbReference>
<dbReference type="PROSITE" id="PS50929">
    <property type="entry name" value="ABC_TM1F"/>
    <property type="match status" value="1"/>
</dbReference>
<dbReference type="PROSITE" id="PS00211">
    <property type="entry name" value="ABC_TRANSPORTER_1"/>
    <property type="match status" value="1"/>
</dbReference>
<dbReference type="PROSITE" id="PS50893">
    <property type="entry name" value="ABC_TRANSPORTER_2"/>
    <property type="match status" value="1"/>
</dbReference>
<evidence type="ECO:0000255" key="1"/>
<evidence type="ECO:0000255" key="2">
    <source>
        <dbReference type="PROSITE-ProRule" id="PRU00434"/>
    </source>
</evidence>
<evidence type="ECO:0000255" key="3">
    <source>
        <dbReference type="PROSITE-ProRule" id="PRU00441"/>
    </source>
</evidence>
<evidence type="ECO:0000305" key="4"/>
<gene>
    <name type="primary">yddA</name>
    <name type="ordered locus">b1496</name>
    <name type="ordered locus">JW5242</name>
</gene>
<feature type="chain" id="PRO_0000093163" description="Inner membrane ABC transporter ATP-binding protein YddA">
    <location>
        <begin position="1"/>
        <end position="561"/>
    </location>
</feature>
<feature type="topological domain" description="Cytoplasmic" evidence="1">
    <location>
        <begin position="1"/>
        <end position="3"/>
    </location>
</feature>
<feature type="transmembrane region" description="Helical" evidence="3">
    <location>
        <begin position="4"/>
        <end position="24"/>
    </location>
</feature>
<feature type="topological domain" description="Periplasmic" evidence="1">
    <location>
        <begin position="25"/>
        <end position="31"/>
    </location>
</feature>
<feature type="transmembrane region" description="Helical" evidence="3">
    <location>
        <begin position="32"/>
        <end position="52"/>
    </location>
</feature>
<feature type="topological domain" description="Cytoplasmic" evidence="1">
    <location>
        <begin position="53"/>
        <end position="70"/>
    </location>
</feature>
<feature type="transmembrane region" description="Helical" evidence="3">
    <location>
        <begin position="71"/>
        <end position="91"/>
    </location>
</feature>
<feature type="topological domain" description="Periplasmic" evidence="1">
    <location>
        <begin position="92"/>
        <end position="151"/>
    </location>
</feature>
<feature type="transmembrane region" description="Helical" evidence="3">
    <location>
        <begin position="152"/>
        <end position="172"/>
    </location>
</feature>
<feature type="topological domain" description="Cytoplasmic" evidence="1">
    <location>
        <begin position="173"/>
        <end position="187"/>
    </location>
</feature>
<feature type="transmembrane region" description="Helical" evidence="3">
    <location>
        <begin position="188"/>
        <end position="208"/>
    </location>
</feature>
<feature type="topological domain" description="Periplasmic" evidence="1">
    <location>
        <begin position="209"/>
        <end position="290"/>
    </location>
</feature>
<feature type="transmembrane region" description="Helical" evidence="3">
    <location>
        <begin position="291"/>
        <end position="311"/>
    </location>
</feature>
<feature type="topological domain" description="Cytoplasmic" evidence="1">
    <location>
        <begin position="312"/>
        <end position="561"/>
    </location>
</feature>
<feature type="domain" description="ABC transmembrane type-1" evidence="3">
    <location>
        <begin position="35"/>
        <end position="337"/>
    </location>
</feature>
<feature type="domain" description="ABC transporter" evidence="2">
    <location>
        <begin position="367"/>
        <end position="561"/>
    </location>
</feature>
<feature type="binding site" evidence="2">
    <location>
        <begin position="400"/>
        <end position="407"/>
    </location>
    <ligand>
        <name>ATP</name>
        <dbReference type="ChEBI" id="CHEBI:30616"/>
    </ligand>
</feature>
<organism>
    <name type="scientific">Escherichia coli (strain K12)</name>
    <dbReference type="NCBI Taxonomy" id="83333"/>
    <lineage>
        <taxon>Bacteria</taxon>
        <taxon>Pseudomonadati</taxon>
        <taxon>Pseudomonadota</taxon>
        <taxon>Gammaproteobacteria</taxon>
        <taxon>Enterobacterales</taxon>
        <taxon>Enterobacteriaceae</taxon>
        <taxon>Escherichia</taxon>
    </lineage>
</organism>
<proteinExistence type="evidence at protein level"/>
<sequence length="561" mass="64985">MITIPITLRMLIAKYLCLLKPFWLRKNNKTSVLLIIIILAMILGVVKIQVWLNDWNNDFFNALSQKETDKLWQLVLWFPALLGIFVLISVNKTWLIKLLTIRWREWLTDYYLNRWFADKNYYFTQIYGEHKNTDNPDQRIAEDILLLISKTLSLSFGFIQSLSMLITFTVILWESAGTLSFTVGGTEWNIQGYMVYTVVLIVIGGTLFTHKVGKRIRPLNVEKQRSEATFRTNLVQHNKQAELIALSNAESLQRQELSDNFHTIKENWHRLMNRQRWLDYWQNIYSRSLSVLPYFLLLPQFISGQINLGGLMKSRQAFMLVSNNLSWFIYKYDELAELAAVIDRLYEFHQLTEQRPTNKPKNCQHAVQVADASIRTPDNKIILENLNFHVSPGKWLLLKGYSGAGKTTLLKTLSHCWPWFKGDISSPADSWYVSQTPLIKTGLLKEIICKALPLPVDDKSLSEVLHQVGLGKLAARIHDHDRWGDILSSGEKQRIALARLILRRPKWIFLDETTSHLEEQEAIRLLRLVREKLPTSGVIMVTHQPGVWNLADDICDISAVL</sequence>
<name>YDDA_ECOLI</name>
<keyword id="KW-0067">ATP-binding</keyword>
<keyword id="KW-0997">Cell inner membrane</keyword>
<keyword id="KW-1003">Cell membrane</keyword>
<keyword id="KW-0472">Membrane</keyword>
<keyword id="KW-0547">Nucleotide-binding</keyword>
<keyword id="KW-1185">Reference proteome</keyword>
<keyword id="KW-0812">Transmembrane</keyword>
<keyword id="KW-1133">Transmembrane helix</keyword>
<keyword id="KW-0813">Transport</keyword>
<accession>P31826</accession>
<accession>P76133</accession>
<accession>P76876</accession>
<protein>
    <recommendedName>
        <fullName>Inner membrane ABC transporter ATP-binding protein YddA</fullName>
    </recommendedName>
    <alternativeName>
        <fullName>CDS102</fullName>
    </alternativeName>
</protein>